<accession>Q8VW76</accession>
<name>FPG_PHODP</name>
<organism>
    <name type="scientific">Photobacterium damsela subsp. piscicida</name>
    <name type="common">Pasteurella piscicida</name>
    <dbReference type="NCBI Taxonomy" id="38294"/>
    <lineage>
        <taxon>Bacteria</taxon>
        <taxon>Pseudomonadati</taxon>
        <taxon>Pseudomonadota</taxon>
        <taxon>Gammaproteobacteria</taxon>
        <taxon>Vibrionales</taxon>
        <taxon>Vibrionaceae</taxon>
        <taxon>Photobacterium</taxon>
    </lineage>
</organism>
<evidence type="ECO:0000250" key="1"/>
<evidence type="ECO:0000255" key="2">
    <source>
        <dbReference type="HAMAP-Rule" id="MF_00103"/>
    </source>
</evidence>
<feature type="initiator methionine" description="Removed" evidence="1">
    <location>
        <position position="1"/>
    </location>
</feature>
<feature type="chain" id="PRO_0000170847" description="Formamidopyrimidine-DNA glycosylase">
    <location>
        <begin position="2"/>
        <end position="269"/>
    </location>
</feature>
<feature type="zinc finger region" description="FPG-type" evidence="2">
    <location>
        <begin position="235"/>
        <end position="269"/>
    </location>
</feature>
<feature type="active site" description="Schiff-base intermediate with DNA" evidence="2">
    <location>
        <position position="2"/>
    </location>
</feature>
<feature type="active site" description="Proton donor" evidence="2">
    <location>
        <position position="3"/>
    </location>
</feature>
<feature type="active site" description="Proton donor; for beta-elimination activity" evidence="2">
    <location>
        <position position="57"/>
    </location>
</feature>
<feature type="active site" description="Proton donor; for delta-elimination activity" evidence="2">
    <location>
        <position position="259"/>
    </location>
</feature>
<feature type="binding site" evidence="2">
    <location>
        <position position="90"/>
    </location>
    <ligand>
        <name>DNA</name>
        <dbReference type="ChEBI" id="CHEBI:16991"/>
    </ligand>
</feature>
<feature type="binding site" evidence="2">
    <location>
        <position position="109"/>
    </location>
    <ligand>
        <name>DNA</name>
        <dbReference type="ChEBI" id="CHEBI:16991"/>
    </ligand>
</feature>
<feature type="binding site" evidence="2">
    <location>
        <position position="150"/>
    </location>
    <ligand>
        <name>DNA</name>
        <dbReference type="ChEBI" id="CHEBI:16991"/>
    </ligand>
</feature>
<proteinExistence type="inferred from homology"/>
<dbReference type="EC" id="3.2.2.23" evidence="2"/>
<dbReference type="EC" id="4.2.99.18" evidence="2"/>
<dbReference type="EMBL" id="AB074141">
    <property type="protein sequence ID" value="BAB71962.1"/>
    <property type="molecule type" value="Genomic_DNA"/>
</dbReference>
<dbReference type="RefSeq" id="WP_044173992.1">
    <property type="nucleotide sequence ID" value="NZ_SUMH01000354.1"/>
</dbReference>
<dbReference type="SMR" id="Q8VW76"/>
<dbReference type="GO" id="GO:0034039">
    <property type="term" value="F:8-oxo-7,8-dihydroguanine DNA N-glycosylase activity"/>
    <property type="evidence" value="ECO:0007669"/>
    <property type="project" value="TreeGrafter"/>
</dbReference>
<dbReference type="GO" id="GO:0140078">
    <property type="term" value="F:class I DNA-(apurinic or apyrimidinic site) endonuclease activity"/>
    <property type="evidence" value="ECO:0007669"/>
    <property type="project" value="UniProtKB-EC"/>
</dbReference>
<dbReference type="GO" id="GO:0003684">
    <property type="term" value="F:damaged DNA binding"/>
    <property type="evidence" value="ECO:0007669"/>
    <property type="project" value="InterPro"/>
</dbReference>
<dbReference type="GO" id="GO:0008270">
    <property type="term" value="F:zinc ion binding"/>
    <property type="evidence" value="ECO:0007669"/>
    <property type="project" value="UniProtKB-UniRule"/>
</dbReference>
<dbReference type="GO" id="GO:0006284">
    <property type="term" value="P:base-excision repair"/>
    <property type="evidence" value="ECO:0007669"/>
    <property type="project" value="InterPro"/>
</dbReference>
<dbReference type="CDD" id="cd08966">
    <property type="entry name" value="EcFpg-like_N"/>
    <property type="match status" value="1"/>
</dbReference>
<dbReference type="FunFam" id="1.10.8.50:FF:000003">
    <property type="entry name" value="Formamidopyrimidine-DNA glycosylase"/>
    <property type="match status" value="1"/>
</dbReference>
<dbReference type="FunFam" id="3.20.190.10:FF:000001">
    <property type="entry name" value="Formamidopyrimidine-DNA glycosylase"/>
    <property type="match status" value="1"/>
</dbReference>
<dbReference type="Gene3D" id="1.10.8.50">
    <property type="match status" value="1"/>
</dbReference>
<dbReference type="Gene3D" id="3.20.190.10">
    <property type="entry name" value="MutM-like, N-terminal"/>
    <property type="match status" value="1"/>
</dbReference>
<dbReference type="HAMAP" id="MF_00103">
    <property type="entry name" value="Fapy_DNA_glycosyl"/>
    <property type="match status" value="1"/>
</dbReference>
<dbReference type="InterPro" id="IPR015886">
    <property type="entry name" value="DNA_glyclase/AP_lyase_DNA-bd"/>
</dbReference>
<dbReference type="InterPro" id="IPR015887">
    <property type="entry name" value="DNA_glyclase_Znf_dom_DNA_BS"/>
</dbReference>
<dbReference type="InterPro" id="IPR020629">
    <property type="entry name" value="Formamido-pyr_DNA_Glyclase"/>
</dbReference>
<dbReference type="InterPro" id="IPR012319">
    <property type="entry name" value="FPG_cat"/>
</dbReference>
<dbReference type="InterPro" id="IPR035937">
    <property type="entry name" value="MutM-like_N-ter"/>
</dbReference>
<dbReference type="InterPro" id="IPR010979">
    <property type="entry name" value="Ribosomal_uS13-like_H2TH"/>
</dbReference>
<dbReference type="InterPro" id="IPR000214">
    <property type="entry name" value="Znf_DNA_glyclase/AP_lyase"/>
</dbReference>
<dbReference type="InterPro" id="IPR010663">
    <property type="entry name" value="Znf_FPG/IleRS"/>
</dbReference>
<dbReference type="NCBIfam" id="TIGR00577">
    <property type="entry name" value="fpg"/>
    <property type="match status" value="1"/>
</dbReference>
<dbReference type="NCBIfam" id="NF002211">
    <property type="entry name" value="PRK01103.1"/>
    <property type="match status" value="1"/>
</dbReference>
<dbReference type="PANTHER" id="PTHR22993">
    <property type="entry name" value="FORMAMIDOPYRIMIDINE-DNA GLYCOSYLASE"/>
    <property type="match status" value="1"/>
</dbReference>
<dbReference type="PANTHER" id="PTHR22993:SF9">
    <property type="entry name" value="FORMAMIDOPYRIMIDINE-DNA GLYCOSYLASE"/>
    <property type="match status" value="1"/>
</dbReference>
<dbReference type="Pfam" id="PF01149">
    <property type="entry name" value="Fapy_DNA_glyco"/>
    <property type="match status" value="1"/>
</dbReference>
<dbReference type="Pfam" id="PF06831">
    <property type="entry name" value="H2TH"/>
    <property type="match status" value="1"/>
</dbReference>
<dbReference type="Pfam" id="PF06827">
    <property type="entry name" value="zf-FPG_IleRS"/>
    <property type="match status" value="1"/>
</dbReference>
<dbReference type="SMART" id="SM00898">
    <property type="entry name" value="Fapy_DNA_glyco"/>
    <property type="match status" value="1"/>
</dbReference>
<dbReference type="SMART" id="SM01232">
    <property type="entry name" value="H2TH"/>
    <property type="match status" value="1"/>
</dbReference>
<dbReference type="SUPFAM" id="SSF57716">
    <property type="entry name" value="Glucocorticoid receptor-like (DNA-binding domain)"/>
    <property type="match status" value="1"/>
</dbReference>
<dbReference type="SUPFAM" id="SSF81624">
    <property type="entry name" value="N-terminal domain of MutM-like DNA repair proteins"/>
    <property type="match status" value="1"/>
</dbReference>
<dbReference type="SUPFAM" id="SSF46946">
    <property type="entry name" value="S13-like H2TH domain"/>
    <property type="match status" value="1"/>
</dbReference>
<dbReference type="PROSITE" id="PS51068">
    <property type="entry name" value="FPG_CAT"/>
    <property type="match status" value="1"/>
</dbReference>
<dbReference type="PROSITE" id="PS01242">
    <property type="entry name" value="ZF_FPG_1"/>
    <property type="match status" value="1"/>
</dbReference>
<dbReference type="PROSITE" id="PS51066">
    <property type="entry name" value="ZF_FPG_2"/>
    <property type="match status" value="1"/>
</dbReference>
<sequence>MPELPEVEVTRLGITPHVLHQTVTDIVIRNGRLRWPIPDDINQIKQQPITKVRRRAKYLLLDTPVGSAIVHLGMSGSLRVLPAGTAPEKHDHVDLALSSGEILRYNDPRRFGAWLWQPVDTKHHVLAKLGPEPLTDVFTADYLQQKAKGKRTAIKQFIMDNHIVVGVGNIYANESLFSAGIHPQKAAGEVTPQALTVLVDEIKAVLAFAIQQGGTTLKDFKNADGKPGYFAQELQVYGKGGLPCPKCGTELAEVKIGQRATVYCSQCQQ</sequence>
<keyword id="KW-0227">DNA damage</keyword>
<keyword id="KW-0234">DNA repair</keyword>
<keyword id="KW-0238">DNA-binding</keyword>
<keyword id="KW-0326">Glycosidase</keyword>
<keyword id="KW-0378">Hydrolase</keyword>
<keyword id="KW-0456">Lyase</keyword>
<keyword id="KW-0479">Metal-binding</keyword>
<keyword id="KW-0511">Multifunctional enzyme</keyword>
<keyword id="KW-0862">Zinc</keyword>
<keyword id="KW-0863">Zinc-finger</keyword>
<gene>
    <name evidence="2" type="primary">mutM</name>
    <name evidence="2" type="synonym">fpg</name>
</gene>
<comment type="function">
    <text evidence="2">Involved in base excision repair of DNA damaged by oxidation or by mutagenic agents. Acts as a DNA glycosylase that recognizes and removes damaged bases. Has a preference for oxidized purines, such as 7,8-dihydro-8-oxoguanine (8-oxoG). Has AP (apurinic/apyrimidinic) lyase activity and introduces nicks in the DNA strand. Cleaves the DNA backbone by beta-delta elimination to generate a single-strand break at the site of the removed base with both 3'- and 5'-phosphates.</text>
</comment>
<comment type="catalytic activity">
    <reaction evidence="2">
        <text>Hydrolysis of DNA containing ring-opened 7-methylguanine residues, releasing 2,6-diamino-4-hydroxy-5-(N-methyl)formamidopyrimidine.</text>
        <dbReference type="EC" id="3.2.2.23"/>
    </reaction>
</comment>
<comment type="catalytic activity">
    <reaction evidence="2">
        <text>2'-deoxyribonucleotide-(2'-deoxyribose 5'-phosphate)-2'-deoxyribonucleotide-DNA = a 3'-end 2'-deoxyribonucleotide-(2,3-dehydro-2,3-deoxyribose 5'-phosphate)-DNA + a 5'-end 5'-phospho-2'-deoxyribonucleoside-DNA + H(+)</text>
        <dbReference type="Rhea" id="RHEA:66592"/>
        <dbReference type="Rhea" id="RHEA-COMP:13180"/>
        <dbReference type="Rhea" id="RHEA-COMP:16897"/>
        <dbReference type="Rhea" id="RHEA-COMP:17067"/>
        <dbReference type="ChEBI" id="CHEBI:15378"/>
        <dbReference type="ChEBI" id="CHEBI:136412"/>
        <dbReference type="ChEBI" id="CHEBI:157695"/>
        <dbReference type="ChEBI" id="CHEBI:167181"/>
        <dbReference type="EC" id="4.2.99.18"/>
    </reaction>
</comment>
<comment type="cofactor">
    <cofactor evidence="2">
        <name>Zn(2+)</name>
        <dbReference type="ChEBI" id="CHEBI:29105"/>
    </cofactor>
    <text evidence="2">Binds 1 zinc ion per subunit.</text>
</comment>
<comment type="subunit">
    <text evidence="2">Monomer.</text>
</comment>
<comment type="similarity">
    <text evidence="2">Belongs to the FPG family.</text>
</comment>
<reference key="1">
    <citation type="submission" date="2001-11" db="EMBL/GenBank/DDBJ databases">
        <title>Formamidopyrimidine-DNA glycosylase (Vibrio cholerae) homolog.</title>
        <authorList>
            <person name="Rattanachai A."/>
            <person name="Hirono I."/>
            <person name="Aoki T."/>
        </authorList>
    </citation>
    <scope>NUCLEOTIDE SEQUENCE [GENOMIC DNA]</scope>
</reference>
<protein>
    <recommendedName>
        <fullName evidence="2">Formamidopyrimidine-DNA glycosylase</fullName>
        <shortName evidence="2">Fapy-DNA glycosylase</shortName>
        <ecNumber evidence="2">3.2.2.23</ecNumber>
    </recommendedName>
    <alternativeName>
        <fullName evidence="2">DNA-(apurinic or apyrimidinic site) lyase MutM</fullName>
        <shortName evidence="2">AP lyase MutM</shortName>
        <ecNumber evidence="2">4.2.99.18</ecNumber>
    </alternativeName>
</protein>